<reference key="1">
    <citation type="submission" date="2002-09" db="EMBL/GenBank/DDBJ databases">
        <authorList>
            <person name="Guo J.H."/>
            <person name="Yu L."/>
        </authorList>
    </citation>
    <scope>NUCLEOTIDE SEQUENCE [LARGE SCALE MRNA]</scope>
    <source>
        <tissue>Testis</tissue>
    </source>
</reference>
<reference key="2">
    <citation type="journal article" date="2004" name="Genome Res.">
        <title>The status, quality, and expansion of the NIH full-length cDNA project: the Mammalian Gene Collection (MGC).</title>
        <authorList>
            <consortium name="The MGC Project Team"/>
        </authorList>
    </citation>
    <scope>NUCLEOTIDE SEQUENCE [LARGE SCALE MRNA] OF 10-188</scope>
    <source>
        <tissue>Testis</tissue>
    </source>
</reference>
<keyword id="KW-0238">DNA-binding</keyword>
<keyword id="KW-0371">Homeobox</keyword>
<keyword id="KW-0539">Nucleus</keyword>
<keyword id="KW-1185">Reference proteome</keyword>
<sequence>MHRARWLTPVIPALWEAEAGRSRGQEIETILANKKQSAMPWDQDPEQSTGNYSEDEQNGKQKWREEGEAGRKREREKEEKNEKELQDEQENKRKRENEKQKQYPEKRLVSKSLMHTLWAKFKLNRCPTIQESLSLSFEFDMTHKQISQWFCKTRKKYNKEMSKRKHKKKHMRWRSLCCQGWSRTPALK</sequence>
<dbReference type="EMBL" id="AY151139">
    <property type="protein sequence ID" value="AAP76323.1"/>
    <property type="molecule type" value="mRNA"/>
</dbReference>
<dbReference type="EMBL" id="BC036226">
    <property type="status" value="NOT_ANNOTATED_CDS"/>
    <property type="molecule type" value="mRNA"/>
</dbReference>
<dbReference type="CCDS" id="CCDS44826.1"/>
<dbReference type="RefSeq" id="NP_001138937.1">
    <property type="nucleotide sequence ID" value="NM_001145465.1"/>
</dbReference>
<dbReference type="SMR" id="Q7Z5D8"/>
<dbReference type="BioGRID" id="131826">
    <property type="interactions" value="2"/>
</dbReference>
<dbReference type="FunCoup" id="Q7Z5D8">
    <property type="interactions" value="8"/>
</dbReference>
<dbReference type="IntAct" id="Q7Z5D8">
    <property type="interactions" value="1"/>
</dbReference>
<dbReference type="STRING" id="9606.ENSP00000371553"/>
<dbReference type="iPTMnet" id="Q7Z5D8"/>
<dbReference type="PhosphoSitePlus" id="Q7Z5D8"/>
<dbReference type="BioMuta" id="NANOGNB"/>
<dbReference type="DMDM" id="74759191"/>
<dbReference type="MassIVE" id="Q7Z5D8"/>
<dbReference type="PaxDb" id="9606-ENSP00000371553"/>
<dbReference type="PeptideAtlas" id="Q7Z5D8"/>
<dbReference type="Antibodypedia" id="70783">
    <property type="antibodies" value="4 antibodies from 4 providers"/>
</dbReference>
<dbReference type="DNASU" id="360030"/>
<dbReference type="Ensembl" id="ENST00000382119.1">
    <property type="protein sequence ID" value="ENSP00000371553.1"/>
    <property type="gene ID" value="ENSG00000205857.2"/>
</dbReference>
<dbReference type="GeneID" id="360030"/>
<dbReference type="KEGG" id="hsa:360030"/>
<dbReference type="MANE-Select" id="ENST00000382119.1">
    <property type="protein sequence ID" value="ENSP00000371553.1"/>
    <property type="RefSeq nucleotide sequence ID" value="NM_001145465.1"/>
    <property type="RefSeq protein sequence ID" value="NP_001138937.1"/>
</dbReference>
<dbReference type="UCSC" id="uc009zfx.2">
    <property type="organism name" value="human"/>
</dbReference>
<dbReference type="AGR" id="HGNC:24958"/>
<dbReference type="CTD" id="360030"/>
<dbReference type="GeneCards" id="NANOGNB"/>
<dbReference type="HGNC" id="HGNC:24958">
    <property type="gene designation" value="NANOGNB"/>
</dbReference>
<dbReference type="HPA" id="ENSG00000205857">
    <property type="expression patterns" value="Not detected"/>
</dbReference>
<dbReference type="MIM" id="620692">
    <property type="type" value="gene"/>
</dbReference>
<dbReference type="neXtProt" id="NX_Q7Z5D8"/>
<dbReference type="PharmGKB" id="PA165513123"/>
<dbReference type="VEuPathDB" id="HostDB:ENSG00000205857"/>
<dbReference type="eggNOG" id="ENOG502RU3B">
    <property type="taxonomic scope" value="Eukaryota"/>
</dbReference>
<dbReference type="GeneTree" id="ENSGT00400000025247"/>
<dbReference type="HOGENOM" id="CLU_143203_0_0_1"/>
<dbReference type="InParanoid" id="Q7Z5D8"/>
<dbReference type="OMA" id="NHHEDER"/>
<dbReference type="OrthoDB" id="9540023at2759"/>
<dbReference type="PAN-GO" id="Q7Z5D8">
    <property type="GO annotations" value="0 GO annotations based on evolutionary models"/>
</dbReference>
<dbReference type="PhylomeDB" id="Q7Z5D8"/>
<dbReference type="TreeFam" id="TF350480"/>
<dbReference type="PathwayCommons" id="Q7Z5D8"/>
<dbReference type="SignaLink" id="Q7Z5D8"/>
<dbReference type="BioGRID-ORCS" id="360030">
    <property type="hits" value="25 hits in 1147 CRISPR screens"/>
</dbReference>
<dbReference type="ChiTaRS" id="NANOGNB">
    <property type="organism name" value="human"/>
</dbReference>
<dbReference type="GenomeRNAi" id="360030"/>
<dbReference type="Pharos" id="Q7Z5D8">
    <property type="development level" value="Tdark"/>
</dbReference>
<dbReference type="PRO" id="PR:Q7Z5D8"/>
<dbReference type="Proteomes" id="UP000005640">
    <property type="component" value="Chromosome 12"/>
</dbReference>
<dbReference type="RNAct" id="Q7Z5D8">
    <property type="molecule type" value="protein"/>
</dbReference>
<dbReference type="Bgee" id="ENSG00000205857">
    <property type="expression patterns" value="Expressed in male germ line stem cell (sensu Vertebrata) in testis and 9 other cell types or tissues"/>
</dbReference>
<dbReference type="ExpressionAtlas" id="Q7Z5D8">
    <property type="expression patterns" value="baseline and differential"/>
</dbReference>
<dbReference type="GO" id="GO:0005634">
    <property type="term" value="C:nucleus"/>
    <property type="evidence" value="ECO:0007669"/>
    <property type="project" value="UniProtKB-SubCell"/>
</dbReference>
<dbReference type="GO" id="GO:0003677">
    <property type="term" value="F:DNA binding"/>
    <property type="evidence" value="ECO:0007669"/>
    <property type="project" value="UniProtKB-KW"/>
</dbReference>
<dbReference type="GO" id="GO:0003700">
    <property type="term" value="F:DNA-binding transcription factor activity"/>
    <property type="evidence" value="ECO:0000303"/>
    <property type="project" value="ARUK-UCL"/>
</dbReference>
<dbReference type="GO" id="GO:0006357">
    <property type="term" value="P:regulation of transcription by RNA polymerase II"/>
    <property type="evidence" value="ECO:0000303"/>
    <property type="project" value="ARUK-UCL"/>
</dbReference>
<dbReference type="Gene3D" id="1.10.10.60">
    <property type="entry name" value="Homeodomain-like"/>
    <property type="match status" value="1"/>
</dbReference>
<dbReference type="InterPro" id="IPR001356">
    <property type="entry name" value="HD"/>
</dbReference>
<dbReference type="InterPro" id="IPR009057">
    <property type="entry name" value="Homeodomain-like_sf"/>
</dbReference>
<dbReference type="Pfam" id="PF00046">
    <property type="entry name" value="Homeodomain"/>
    <property type="match status" value="1"/>
</dbReference>
<dbReference type="SUPFAM" id="SSF46689">
    <property type="entry name" value="Homeodomain-like"/>
    <property type="match status" value="1"/>
</dbReference>
<dbReference type="PROSITE" id="PS50071">
    <property type="entry name" value="HOMEOBOX_2"/>
    <property type="match status" value="1"/>
</dbReference>
<organism>
    <name type="scientific">Homo sapiens</name>
    <name type="common">Human</name>
    <dbReference type="NCBI Taxonomy" id="9606"/>
    <lineage>
        <taxon>Eukaryota</taxon>
        <taxon>Metazoa</taxon>
        <taxon>Chordata</taxon>
        <taxon>Craniata</taxon>
        <taxon>Vertebrata</taxon>
        <taxon>Euteleostomi</taxon>
        <taxon>Mammalia</taxon>
        <taxon>Eutheria</taxon>
        <taxon>Euarchontoglires</taxon>
        <taxon>Primates</taxon>
        <taxon>Haplorrhini</taxon>
        <taxon>Catarrhini</taxon>
        <taxon>Hominidae</taxon>
        <taxon>Homo</taxon>
    </lineage>
</organism>
<protein>
    <recommendedName>
        <fullName>NANOG neighbor homeobox</fullName>
    </recommendedName>
    <alternativeName>
        <fullName>Homeobox protein C14</fullName>
    </alternativeName>
</protein>
<feature type="chain" id="PRO_0000341417" description="NANOG neighbor homeobox">
    <location>
        <begin position="1"/>
        <end position="188"/>
    </location>
</feature>
<feature type="DNA-binding region" description="Homeobox" evidence="1">
    <location>
        <begin position="102"/>
        <end position="161"/>
    </location>
</feature>
<feature type="region of interest" description="Disordered" evidence="2">
    <location>
        <begin position="28"/>
        <end position="106"/>
    </location>
</feature>
<feature type="compositionally biased region" description="Basic and acidic residues" evidence="2">
    <location>
        <begin position="57"/>
        <end position="106"/>
    </location>
</feature>
<gene>
    <name type="primary">NANOGNB</name>
</gene>
<accession>Q7Z5D8</accession>
<proteinExistence type="evidence at transcript level"/>
<comment type="subcellular location">
    <subcellularLocation>
        <location evidence="1">Nucleus</location>
    </subcellularLocation>
</comment>
<name>NANGN_HUMAN</name>
<evidence type="ECO:0000255" key="1">
    <source>
        <dbReference type="PROSITE-ProRule" id="PRU00108"/>
    </source>
</evidence>
<evidence type="ECO:0000256" key="2">
    <source>
        <dbReference type="SAM" id="MobiDB-lite"/>
    </source>
</evidence>